<accession>P25547</accession>
<keyword id="KW-0010">Activator</keyword>
<keyword id="KW-0238">DNA-binding</keyword>
<keyword id="KW-0678">Repressor</keyword>
<keyword id="KW-0804">Transcription</keyword>
<keyword id="KW-0805">Transcription regulation</keyword>
<feature type="chain" id="PRO_0000105623" description="HTH-type transcriptional regulator GbpR">
    <location>
        <begin position="1"/>
        <end position="302"/>
    </location>
</feature>
<feature type="domain" description="HTH lysR-type" evidence="1">
    <location>
        <begin position="1"/>
        <end position="56"/>
    </location>
</feature>
<feature type="DNA-binding region" description="H-T-H motif" evidence="1">
    <location>
        <begin position="16"/>
        <end position="35"/>
    </location>
</feature>
<feature type="sequence conflict" description="In Ref. 2; AAA22108." evidence="2" ref="2">
    <location>
        <begin position="61"/>
        <end position="62"/>
    </location>
</feature>
<organism>
    <name type="scientific">Rhizobium radiobacter</name>
    <name type="common">Agrobacterium tumefaciens</name>
    <name type="synonym">Agrobacterium radiobacter</name>
    <dbReference type="NCBI Taxonomy" id="358"/>
    <lineage>
        <taxon>Bacteria</taxon>
        <taxon>Pseudomonadati</taxon>
        <taxon>Pseudomonadota</taxon>
        <taxon>Alphaproteobacteria</taxon>
        <taxon>Hyphomicrobiales</taxon>
        <taxon>Rhizobiaceae</taxon>
        <taxon>Rhizobium/Agrobacterium group</taxon>
        <taxon>Agrobacterium</taxon>
        <taxon>Agrobacterium tumefaciens complex</taxon>
    </lineage>
</organism>
<proteinExistence type="inferred from homology"/>
<reference key="1">
    <citation type="journal article" date="1993" name="J. Bacteriol.">
        <title>The chromosomal virulence gene, chvE, of Agrobacterium tumefaciens is regulated by a LysR family member.</title>
        <authorList>
            <person name="Doty S.L."/>
            <person name="Chang M."/>
            <person name="Nester E.W."/>
        </authorList>
    </citation>
    <scope>NUCLEOTIDE SEQUENCE [GENOMIC DNA]</scope>
    <source>
        <strain>A348</strain>
    </source>
</reference>
<reference key="2">
    <citation type="journal article" date="1990" name="J. Bacteriol.">
        <title>A chromosomal Agrobacterium tumefaciens gene required for effective plant signal transduction.</title>
        <authorList>
            <person name="Huang M.-L.W."/>
            <person name="Cangelosi G.A."/>
            <person name="Halperin W."/>
            <person name="Nester E.W."/>
        </authorList>
    </citation>
    <scope>NUCLEOTIDE SEQUENCE [GENOMIC DNA] OF 1-252</scope>
</reference>
<name>GBPR_RHIRD</name>
<dbReference type="EMBL" id="L10424">
    <property type="protein sequence ID" value="AAA16197.1"/>
    <property type="molecule type" value="Unassigned_DNA"/>
</dbReference>
<dbReference type="EMBL" id="M30318">
    <property type="protein sequence ID" value="AAA22108.2"/>
    <property type="molecule type" value="Genomic_DNA"/>
</dbReference>
<dbReference type="PIR" id="I39716">
    <property type="entry name" value="I39716"/>
</dbReference>
<dbReference type="SMR" id="P25547"/>
<dbReference type="GO" id="GO:0005829">
    <property type="term" value="C:cytosol"/>
    <property type="evidence" value="ECO:0007669"/>
    <property type="project" value="TreeGrafter"/>
</dbReference>
<dbReference type="GO" id="GO:0003677">
    <property type="term" value="F:DNA binding"/>
    <property type="evidence" value="ECO:0007669"/>
    <property type="project" value="UniProtKB-KW"/>
</dbReference>
<dbReference type="GO" id="GO:0003700">
    <property type="term" value="F:DNA-binding transcription factor activity"/>
    <property type="evidence" value="ECO:0007669"/>
    <property type="project" value="InterPro"/>
</dbReference>
<dbReference type="CDD" id="cd08435">
    <property type="entry name" value="PBP2_GbpR"/>
    <property type="match status" value="1"/>
</dbReference>
<dbReference type="Gene3D" id="3.40.190.290">
    <property type="match status" value="1"/>
</dbReference>
<dbReference type="Gene3D" id="1.10.10.10">
    <property type="entry name" value="Winged helix-like DNA-binding domain superfamily/Winged helix DNA-binding domain"/>
    <property type="match status" value="1"/>
</dbReference>
<dbReference type="InterPro" id="IPR037405">
    <property type="entry name" value="GbpR_PBP2"/>
</dbReference>
<dbReference type="InterPro" id="IPR050950">
    <property type="entry name" value="HTH-type_LysR_regulators"/>
</dbReference>
<dbReference type="InterPro" id="IPR005119">
    <property type="entry name" value="LysR_subst-bd"/>
</dbReference>
<dbReference type="InterPro" id="IPR000847">
    <property type="entry name" value="Tscrpt_reg_HTH_LysR"/>
</dbReference>
<dbReference type="InterPro" id="IPR036388">
    <property type="entry name" value="WH-like_DNA-bd_sf"/>
</dbReference>
<dbReference type="InterPro" id="IPR036390">
    <property type="entry name" value="WH_DNA-bd_sf"/>
</dbReference>
<dbReference type="PANTHER" id="PTHR30419">
    <property type="entry name" value="HTH-TYPE TRANSCRIPTIONAL REGULATOR YBHD"/>
    <property type="match status" value="1"/>
</dbReference>
<dbReference type="PANTHER" id="PTHR30419:SF8">
    <property type="entry name" value="NITROGEN ASSIMILATION TRANSCRIPTIONAL ACTIVATOR-RELATED"/>
    <property type="match status" value="1"/>
</dbReference>
<dbReference type="Pfam" id="PF00126">
    <property type="entry name" value="HTH_1"/>
    <property type="match status" value="1"/>
</dbReference>
<dbReference type="Pfam" id="PF03466">
    <property type="entry name" value="LysR_substrate"/>
    <property type="match status" value="1"/>
</dbReference>
<dbReference type="SUPFAM" id="SSF53850">
    <property type="entry name" value="Periplasmic binding protein-like II"/>
    <property type="match status" value="1"/>
</dbReference>
<dbReference type="SUPFAM" id="SSF46785">
    <property type="entry name" value="Winged helix' DNA-binding domain"/>
    <property type="match status" value="1"/>
</dbReference>
<dbReference type="PROSITE" id="PS50931">
    <property type="entry name" value="HTH_LYSR"/>
    <property type="match status" value="1"/>
</dbReference>
<sequence>MSHLRMLVMIEEHGQVSAAAAAMNMTQPAASRMLSEMEAIVKSPLCQRASRGVVLTKFGEALALARRARTILLELREASRELNQMKSGSGGSVYIGAVTAPAISLVVPAIRRAMDTYPGIEINVQVESSNVLARELLAARHDFIIGRIPDDFDPGLFSIHEIGIERACLVVREGHPLMRGEPVTLQDLSGYDWVFQPPGALLRRTMEDVFLTHGVAMPRNVINTPSVVLTLALVCNTNAIAPIAQDMAEFVAGQQADMAEPAFCQRISNSWSSLTASLPPKAGSCRPAPACFMIWCWMKAVS</sequence>
<comment type="function">
    <text>Activator of the expression of chvE when bound to its inducer and represses its expression in the absence of inducer (L-arabinose, D-fucose or D-galactose). Negatively regulates its own expression.</text>
</comment>
<comment type="similarity">
    <text evidence="2">Belongs to the LysR transcriptional regulatory family.</text>
</comment>
<protein>
    <recommendedName>
        <fullName>HTH-type transcriptional regulator GbpR</fullName>
    </recommendedName>
    <alternativeName>
        <fullName>Galactose-binding protein regulator</fullName>
        <shortName>GBP regulator</shortName>
    </alternativeName>
</protein>
<gene>
    <name type="primary">gbpR</name>
    <name type="synonym">chvO</name>
</gene>
<evidence type="ECO:0000255" key="1">
    <source>
        <dbReference type="PROSITE-ProRule" id="PRU00253"/>
    </source>
</evidence>
<evidence type="ECO:0000305" key="2"/>